<proteinExistence type="inferred from homology"/>
<gene>
    <name evidence="1" type="primary">ribH</name>
    <name type="ordered locus">Syncc9902_0103</name>
</gene>
<keyword id="KW-1185">Reference proteome</keyword>
<keyword id="KW-0686">Riboflavin biosynthesis</keyword>
<keyword id="KW-0808">Transferase</keyword>
<evidence type="ECO:0000255" key="1">
    <source>
        <dbReference type="HAMAP-Rule" id="MF_00178"/>
    </source>
</evidence>
<organism>
    <name type="scientific">Synechococcus sp. (strain CC9902)</name>
    <dbReference type="NCBI Taxonomy" id="316279"/>
    <lineage>
        <taxon>Bacteria</taxon>
        <taxon>Bacillati</taxon>
        <taxon>Cyanobacteriota</taxon>
        <taxon>Cyanophyceae</taxon>
        <taxon>Synechococcales</taxon>
        <taxon>Synechococcaceae</taxon>
        <taxon>Synechococcus</taxon>
    </lineage>
</organism>
<comment type="function">
    <text evidence="1">Catalyzes the formation of 6,7-dimethyl-8-ribityllumazine by condensation of 5-amino-6-(D-ribitylamino)uracil with 3,4-dihydroxy-2-butanone 4-phosphate. This is the penultimate step in the biosynthesis of riboflavin.</text>
</comment>
<comment type="catalytic activity">
    <reaction evidence="1">
        <text>(2S)-2-hydroxy-3-oxobutyl phosphate + 5-amino-6-(D-ribitylamino)uracil = 6,7-dimethyl-8-(1-D-ribityl)lumazine + phosphate + 2 H2O + H(+)</text>
        <dbReference type="Rhea" id="RHEA:26152"/>
        <dbReference type="ChEBI" id="CHEBI:15377"/>
        <dbReference type="ChEBI" id="CHEBI:15378"/>
        <dbReference type="ChEBI" id="CHEBI:15934"/>
        <dbReference type="ChEBI" id="CHEBI:43474"/>
        <dbReference type="ChEBI" id="CHEBI:58201"/>
        <dbReference type="ChEBI" id="CHEBI:58830"/>
        <dbReference type="EC" id="2.5.1.78"/>
    </reaction>
</comment>
<comment type="pathway">
    <text evidence="1">Cofactor biosynthesis; riboflavin biosynthesis; riboflavin from 2-hydroxy-3-oxobutyl phosphate and 5-amino-6-(D-ribitylamino)uracil: step 1/2.</text>
</comment>
<comment type="similarity">
    <text evidence="1">Belongs to the DMRL synthase family.</text>
</comment>
<protein>
    <recommendedName>
        <fullName evidence="1">6,7-dimethyl-8-ribityllumazine synthase</fullName>
        <shortName evidence="1">DMRL synthase</shortName>
        <shortName evidence="1">LS</shortName>
        <shortName evidence="1">Lumazine synthase</shortName>
        <ecNumber evidence="1">2.5.1.78</ecNumber>
    </recommendedName>
</protein>
<reference key="1">
    <citation type="submission" date="2005-08" db="EMBL/GenBank/DDBJ databases">
        <title>Complete sequence of Synechococcus sp. CC9902.</title>
        <authorList>
            <person name="Copeland A."/>
            <person name="Lucas S."/>
            <person name="Lapidus A."/>
            <person name="Barry K."/>
            <person name="Detter J.C."/>
            <person name="Glavina T."/>
            <person name="Hammon N."/>
            <person name="Israni S."/>
            <person name="Pitluck S."/>
            <person name="Martinez M."/>
            <person name="Schmutz J."/>
            <person name="Larimer F."/>
            <person name="Land M."/>
            <person name="Kyrpides N."/>
            <person name="Ivanova N."/>
            <person name="Richardson P."/>
        </authorList>
    </citation>
    <scope>NUCLEOTIDE SEQUENCE [LARGE SCALE GENOMIC DNA]</scope>
    <source>
        <strain>CC9902</strain>
    </source>
</reference>
<accession>Q3B0Q0</accession>
<dbReference type="EC" id="2.5.1.78" evidence="1"/>
<dbReference type="EMBL" id="CP000097">
    <property type="protein sequence ID" value="ABB25078.1"/>
    <property type="molecule type" value="Genomic_DNA"/>
</dbReference>
<dbReference type="RefSeq" id="WP_011358945.1">
    <property type="nucleotide sequence ID" value="NC_007513.1"/>
</dbReference>
<dbReference type="SMR" id="Q3B0Q0"/>
<dbReference type="STRING" id="316279.Syncc9902_0103"/>
<dbReference type="KEGG" id="sye:Syncc9902_0103"/>
<dbReference type="eggNOG" id="COG0054">
    <property type="taxonomic scope" value="Bacteria"/>
</dbReference>
<dbReference type="HOGENOM" id="CLU_089358_1_0_3"/>
<dbReference type="OrthoDB" id="9809709at2"/>
<dbReference type="UniPathway" id="UPA00275">
    <property type="reaction ID" value="UER00404"/>
</dbReference>
<dbReference type="Proteomes" id="UP000002712">
    <property type="component" value="Chromosome"/>
</dbReference>
<dbReference type="GO" id="GO:0005829">
    <property type="term" value="C:cytosol"/>
    <property type="evidence" value="ECO:0007669"/>
    <property type="project" value="TreeGrafter"/>
</dbReference>
<dbReference type="GO" id="GO:0009349">
    <property type="term" value="C:riboflavin synthase complex"/>
    <property type="evidence" value="ECO:0007669"/>
    <property type="project" value="InterPro"/>
</dbReference>
<dbReference type="GO" id="GO:0000906">
    <property type="term" value="F:6,7-dimethyl-8-ribityllumazine synthase activity"/>
    <property type="evidence" value="ECO:0007669"/>
    <property type="project" value="UniProtKB-UniRule"/>
</dbReference>
<dbReference type="GO" id="GO:0009231">
    <property type="term" value="P:riboflavin biosynthetic process"/>
    <property type="evidence" value="ECO:0007669"/>
    <property type="project" value="UniProtKB-UniRule"/>
</dbReference>
<dbReference type="CDD" id="cd09209">
    <property type="entry name" value="Lumazine_synthase-I"/>
    <property type="match status" value="1"/>
</dbReference>
<dbReference type="FunFam" id="3.40.50.960:FF:000001">
    <property type="entry name" value="6,7-dimethyl-8-ribityllumazine synthase"/>
    <property type="match status" value="1"/>
</dbReference>
<dbReference type="Gene3D" id="3.40.50.960">
    <property type="entry name" value="Lumazine/riboflavin synthase"/>
    <property type="match status" value="1"/>
</dbReference>
<dbReference type="HAMAP" id="MF_00178">
    <property type="entry name" value="Lumazine_synth"/>
    <property type="match status" value="1"/>
</dbReference>
<dbReference type="InterPro" id="IPR034964">
    <property type="entry name" value="LS"/>
</dbReference>
<dbReference type="InterPro" id="IPR002180">
    <property type="entry name" value="LS/RS"/>
</dbReference>
<dbReference type="InterPro" id="IPR036467">
    <property type="entry name" value="LS/RS_sf"/>
</dbReference>
<dbReference type="NCBIfam" id="TIGR00114">
    <property type="entry name" value="lumazine-synth"/>
    <property type="match status" value="1"/>
</dbReference>
<dbReference type="PANTHER" id="PTHR21058:SF0">
    <property type="entry name" value="6,7-DIMETHYL-8-RIBITYLLUMAZINE SYNTHASE"/>
    <property type="match status" value="1"/>
</dbReference>
<dbReference type="PANTHER" id="PTHR21058">
    <property type="entry name" value="6,7-DIMETHYL-8-RIBITYLLUMAZINE SYNTHASE DMRL SYNTHASE LUMAZINE SYNTHASE"/>
    <property type="match status" value="1"/>
</dbReference>
<dbReference type="Pfam" id="PF00885">
    <property type="entry name" value="DMRL_synthase"/>
    <property type="match status" value="1"/>
</dbReference>
<dbReference type="SUPFAM" id="SSF52121">
    <property type="entry name" value="Lumazine synthase"/>
    <property type="match status" value="1"/>
</dbReference>
<feature type="chain" id="PRO_1000040536" description="6,7-dimethyl-8-ribityllumazine synthase">
    <location>
        <begin position="1"/>
        <end position="162"/>
    </location>
</feature>
<feature type="active site" description="Proton donor" evidence="1">
    <location>
        <position position="93"/>
    </location>
</feature>
<feature type="binding site" evidence="1">
    <location>
        <position position="23"/>
    </location>
    <ligand>
        <name>5-amino-6-(D-ribitylamino)uracil</name>
        <dbReference type="ChEBI" id="CHEBI:15934"/>
    </ligand>
</feature>
<feature type="binding site" evidence="1">
    <location>
        <begin position="61"/>
        <end position="63"/>
    </location>
    <ligand>
        <name>5-amino-6-(D-ribitylamino)uracil</name>
        <dbReference type="ChEBI" id="CHEBI:15934"/>
    </ligand>
</feature>
<feature type="binding site" evidence="1">
    <location>
        <begin position="85"/>
        <end position="87"/>
    </location>
    <ligand>
        <name>5-amino-6-(D-ribitylamino)uracil</name>
        <dbReference type="ChEBI" id="CHEBI:15934"/>
    </ligand>
</feature>
<feature type="binding site" evidence="1">
    <location>
        <begin position="90"/>
        <end position="91"/>
    </location>
    <ligand>
        <name>(2S)-2-hydroxy-3-oxobutyl phosphate</name>
        <dbReference type="ChEBI" id="CHEBI:58830"/>
    </ligand>
</feature>
<feature type="binding site" evidence="1">
    <location>
        <position position="118"/>
    </location>
    <ligand>
        <name>5-amino-6-(D-ribitylamino)uracil</name>
        <dbReference type="ChEBI" id="CHEBI:15934"/>
    </ligand>
</feature>
<feature type="binding site" evidence="1">
    <location>
        <position position="132"/>
    </location>
    <ligand>
        <name>(2S)-2-hydroxy-3-oxobutyl phosphate</name>
        <dbReference type="ChEBI" id="CHEBI:58830"/>
    </ligand>
</feature>
<sequence>MTVFEGNFENSKDLNIGIVVSRFNDLITNKLLSGCIDCLKRHGVNVETNENKVDIAWVPGAYELPLITQLMARTKKYDVIITLGAVIRGDTPHFDVVISEASKGIASVTRDTSIPIIFGVLTTDTMQQALERAGIKNNLGWGYALQALEMGSLVNAMKISKV</sequence>
<name>RISB_SYNS9</name>